<keyword id="KW-0012">Acyltransferase</keyword>
<keyword id="KW-0028">Amino-acid biosynthesis</keyword>
<keyword id="KW-0963">Cytoplasm</keyword>
<keyword id="KW-0486">Methionine biosynthesis</keyword>
<keyword id="KW-1185">Reference proteome</keyword>
<keyword id="KW-0808">Transferase</keyword>
<proteinExistence type="inferred from homology"/>
<name>METXS_NITEU</name>
<sequence length="377" mass="41816">MSTQDSDSIGIVSARRAHFDTPLSLKSGAVLDSYELVYETYGELNADRSNAVLICHALSGNHHVAGVYADNPKNTGWWNNMIGPGKPVDTRKFFVIGINNLGGCHGSTGPISINDKTGKRFGPDFPLVTTADWAKTYVRFADQFSIDCFAAVIGGSLGGMSAMQLALDAPERVRHAIVVAASARLTAQNIAFNDVARQAILTDPDFHDGDYYSHGTHPRRGLRLARMLGHITYLSDDSMASKFGRELRNGSLAFNYDVEFQIESYLHHQGDKFADLFDANTYLLMTKALDYFDPAQDYDGNLSAAFARAQADFLVLSFTSDWRFSPERSRDIVKALLDNKLNVSYAEIPSSYGHDSFLMQDDYYHQLIRAYMNNIAL</sequence>
<comment type="function">
    <text evidence="1">Transfers a succinyl group from succinyl-CoA to L-homoserine, forming succinyl-L-homoserine.</text>
</comment>
<comment type="catalytic activity">
    <reaction evidence="1">
        <text>L-homoserine + succinyl-CoA = O-succinyl-L-homoserine + CoA</text>
        <dbReference type="Rhea" id="RHEA:22008"/>
        <dbReference type="ChEBI" id="CHEBI:57287"/>
        <dbReference type="ChEBI" id="CHEBI:57292"/>
        <dbReference type="ChEBI" id="CHEBI:57476"/>
        <dbReference type="ChEBI" id="CHEBI:57661"/>
        <dbReference type="EC" id="2.3.1.46"/>
    </reaction>
</comment>
<comment type="pathway">
    <text evidence="1">Amino-acid biosynthesis; L-methionine biosynthesis via de novo pathway; O-succinyl-L-homoserine from L-homoserine: step 1/1.</text>
</comment>
<comment type="subunit">
    <text evidence="1">Homodimer.</text>
</comment>
<comment type="subcellular location">
    <subcellularLocation>
        <location evidence="1">Cytoplasm</location>
    </subcellularLocation>
</comment>
<comment type="similarity">
    <text evidence="1">Belongs to the AB hydrolase superfamily. MetX family.</text>
</comment>
<accession>Q81ZZ5</accession>
<gene>
    <name evidence="1" type="primary">metXS</name>
    <name type="ordered locus">NE2186</name>
</gene>
<feature type="chain" id="PRO_0000155734" description="Homoserine O-succinyltransferase">
    <location>
        <begin position="1"/>
        <end position="377"/>
    </location>
</feature>
<feature type="domain" description="AB hydrolase-1" evidence="1">
    <location>
        <begin position="50"/>
        <end position="358"/>
    </location>
</feature>
<feature type="active site" description="Nucleophile" evidence="1">
    <location>
        <position position="156"/>
    </location>
</feature>
<feature type="active site" evidence="1">
    <location>
        <position position="321"/>
    </location>
</feature>
<feature type="active site" evidence="1">
    <location>
        <position position="354"/>
    </location>
</feature>
<feature type="binding site" evidence="1">
    <location>
        <position position="226"/>
    </location>
    <ligand>
        <name>substrate</name>
    </ligand>
</feature>
<feature type="binding site" evidence="1">
    <location>
        <position position="355"/>
    </location>
    <ligand>
        <name>substrate</name>
    </ligand>
</feature>
<feature type="site" description="Important for acyl-CoA specificity" evidence="1">
    <location>
        <position position="323"/>
    </location>
</feature>
<evidence type="ECO:0000255" key="1">
    <source>
        <dbReference type="HAMAP-Rule" id="MF_00296"/>
    </source>
</evidence>
<dbReference type="EC" id="2.3.1.46" evidence="1"/>
<dbReference type="EMBL" id="AL954747">
    <property type="protein sequence ID" value="CAD86097.1"/>
    <property type="molecule type" value="Genomic_DNA"/>
</dbReference>
<dbReference type="SMR" id="Q81ZZ5"/>
<dbReference type="STRING" id="228410.NE2186"/>
<dbReference type="ESTHER" id="niteu-METX">
    <property type="family name" value="Homoserine_transacetylase"/>
</dbReference>
<dbReference type="GeneID" id="87105322"/>
<dbReference type="KEGG" id="neu:NE2186"/>
<dbReference type="eggNOG" id="COG2021">
    <property type="taxonomic scope" value="Bacteria"/>
</dbReference>
<dbReference type="HOGENOM" id="CLU_028760_1_2_4"/>
<dbReference type="OrthoDB" id="9800754at2"/>
<dbReference type="PhylomeDB" id="Q81ZZ5"/>
<dbReference type="UniPathway" id="UPA00051">
    <property type="reaction ID" value="UER00075"/>
</dbReference>
<dbReference type="Proteomes" id="UP000001416">
    <property type="component" value="Chromosome"/>
</dbReference>
<dbReference type="GO" id="GO:0005737">
    <property type="term" value="C:cytoplasm"/>
    <property type="evidence" value="ECO:0007669"/>
    <property type="project" value="UniProtKB-SubCell"/>
</dbReference>
<dbReference type="GO" id="GO:0004414">
    <property type="term" value="F:homoserine O-acetyltransferase activity"/>
    <property type="evidence" value="ECO:0007669"/>
    <property type="project" value="TreeGrafter"/>
</dbReference>
<dbReference type="GO" id="GO:0008899">
    <property type="term" value="F:homoserine O-succinyltransferase activity"/>
    <property type="evidence" value="ECO:0007669"/>
    <property type="project" value="UniProtKB-UniRule"/>
</dbReference>
<dbReference type="GO" id="GO:0009092">
    <property type="term" value="P:homoserine metabolic process"/>
    <property type="evidence" value="ECO:0007669"/>
    <property type="project" value="TreeGrafter"/>
</dbReference>
<dbReference type="GO" id="GO:0009086">
    <property type="term" value="P:methionine biosynthetic process"/>
    <property type="evidence" value="ECO:0007669"/>
    <property type="project" value="UniProtKB-UniRule"/>
</dbReference>
<dbReference type="FunFam" id="1.10.1740.110:FF:000001">
    <property type="entry name" value="Homoserine O-acetyltransferase"/>
    <property type="match status" value="1"/>
</dbReference>
<dbReference type="Gene3D" id="1.10.1740.110">
    <property type="match status" value="1"/>
</dbReference>
<dbReference type="Gene3D" id="3.40.50.1820">
    <property type="entry name" value="alpha/beta hydrolase"/>
    <property type="match status" value="1"/>
</dbReference>
<dbReference type="HAMAP" id="MF_00296">
    <property type="entry name" value="MetX_acyltransf"/>
    <property type="match status" value="1"/>
</dbReference>
<dbReference type="InterPro" id="IPR000073">
    <property type="entry name" value="AB_hydrolase_1"/>
</dbReference>
<dbReference type="InterPro" id="IPR029058">
    <property type="entry name" value="AB_hydrolase_fold"/>
</dbReference>
<dbReference type="InterPro" id="IPR008220">
    <property type="entry name" value="HAT_MetX-like"/>
</dbReference>
<dbReference type="NCBIfam" id="TIGR01392">
    <property type="entry name" value="homoserO_Ac_trn"/>
    <property type="match status" value="1"/>
</dbReference>
<dbReference type="NCBIfam" id="NF001209">
    <property type="entry name" value="PRK00175.1"/>
    <property type="match status" value="1"/>
</dbReference>
<dbReference type="PANTHER" id="PTHR32268">
    <property type="entry name" value="HOMOSERINE O-ACETYLTRANSFERASE"/>
    <property type="match status" value="1"/>
</dbReference>
<dbReference type="PANTHER" id="PTHR32268:SF11">
    <property type="entry name" value="HOMOSERINE O-ACETYLTRANSFERASE"/>
    <property type="match status" value="1"/>
</dbReference>
<dbReference type="Pfam" id="PF00561">
    <property type="entry name" value="Abhydrolase_1"/>
    <property type="match status" value="1"/>
</dbReference>
<dbReference type="PIRSF" id="PIRSF000443">
    <property type="entry name" value="Homoser_Ac_trans"/>
    <property type="match status" value="1"/>
</dbReference>
<dbReference type="SUPFAM" id="SSF53474">
    <property type="entry name" value="alpha/beta-Hydrolases"/>
    <property type="match status" value="1"/>
</dbReference>
<protein>
    <recommendedName>
        <fullName evidence="1">Homoserine O-succinyltransferase</fullName>
        <shortName evidence="1">HST</shortName>
        <ecNumber evidence="1">2.3.1.46</ecNumber>
    </recommendedName>
    <alternativeName>
        <fullName evidence="1">Homoserine transsuccinylase</fullName>
        <shortName evidence="1">HTS</shortName>
    </alternativeName>
</protein>
<reference key="1">
    <citation type="journal article" date="2003" name="J. Bacteriol.">
        <title>Complete genome sequence of the ammonia-oxidizing bacterium and obligate chemolithoautotroph Nitrosomonas europaea.</title>
        <authorList>
            <person name="Chain P."/>
            <person name="Lamerdin J.E."/>
            <person name="Larimer F.W."/>
            <person name="Regala W."/>
            <person name="Lao V."/>
            <person name="Land M.L."/>
            <person name="Hauser L."/>
            <person name="Hooper A.B."/>
            <person name="Klotz M.G."/>
            <person name="Norton J."/>
            <person name="Sayavedra-Soto L.A."/>
            <person name="Arciero D.M."/>
            <person name="Hommes N.G."/>
            <person name="Whittaker M.M."/>
            <person name="Arp D.J."/>
        </authorList>
    </citation>
    <scope>NUCLEOTIDE SEQUENCE [LARGE SCALE GENOMIC DNA]</scope>
    <source>
        <strain>ATCC 19718 / CIP 103999 / KCTC 2705 / NBRC 14298</strain>
    </source>
</reference>
<organism>
    <name type="scientific">Nitrosomonas europaea (strain ATCC 19718 / CIP 103999 / KCTC 2705 / NBRC 14298)</name>
    <dbReference type="NCBI Taxonomy" id="228410"/>
    <lineage>
        <taxon>Bacteria</taxon>
        <taxon>Pseudomonadati</taxon>
        <taxon>Pseudomonadota</taxon>
        <taxon>Betaproteobacteria</taxon>
        <taxon>Nitrosomonadales</taxon>
        <taxon>Nitrosomonadaceae</taxon>
        <taxon>Nitrosomonas</taxon>
    </lineage>
</organism>